<gene>
    <name type="primary">hoxc10a</name>
</gene>
<organism>
    <name type="scientific">Takifugu rubripes</name>
    <name type="common">Japanese pufferfish</name>
    <name type="synonym">Fugu rubripes</name>
    <dbReference type="NCBI Taxonomy" id="31033"/>
    <lineage>
        <taxon>Eukaryota</taxon>
        <taxon>Metazoa</taxon>
        <taxon>Chordata</taxon>
        <taxon>Craniata</taxon>
        <taxon>Vertebrata</taxon>
        <taxon>Euteleostomi</taxon>
        <taxon>Actinopterygii</taxon>
        <taxon>Neopterygii</taxon>
        <taxon>Teleostei</taxon>
        <taxon>Neoteleostei</taxon>
        <taxon>Acanthomorphata</taxon>
        <taxon>Eupercaria</taxon>
        <taxon>Tetraodontiformes</taxon>
        <taxon>Tetradontoidea</taxon>
        <taxon>Tetraodontidae</taxon>
        <taxon>Takifugu</taxon>
    </lineage>
</organism>
<reference key="1">
    <citation type="journal article" date="2006" name="Proc. Natl. Acad. Sci. U.S.A.">
        <title>Highly conserved syntenic blocks at the vertebrate Hox loci and conserved regulatory elements within and outside Hox gene clusters.</title>
        <authorList>
            <person name="Lee A.P."/>
            <person name="Koh E.G.L."/>
            <person name="Tay A."/>
            <person name="Brenner S."/>
            <person name="Venkatesh B."/>
        </authorList>
    </citation>
    <scope>NUCLEOTIDE SEQUENCE [GENOMIC DNA]</scope>
</reference>
<name>HXCAA_TAKRU</name>
<sequence length="346" mass="39216">MSCPNNSGNFLMDPLMGGSSSFRDEGYSSNSGMYIHTAAECGYSVMKVEPSPLSKSRDVPAGSVLLSSFQDAPYLSAQPSTWTPGTKSSRDQQLVAQCLQPCSFPAGNVKEEAFCCFYQDGSKRKQTTESATYIRLRDNRCGPEQTTTQARGCFQMYNREEPQQDDQLFAPACSLLHLGTSVESQSKISCSKFATETGKDERKEEKARSDGCSETSDNEELKGRNLQSQRTLFLCLNVSAILLRNSRVLVFGNSHDASSEKTTGNWLKAKSGRKKRCPYTKHQTLELEKEFLFNMYLSRERRLEISRSINLTDRQVKIWFQNRRMKLKKLNRESREREQGVVYNYC</sequence>
<comment type="function">
    <text evidence="1">Sequence-specific transcription factor which is part of a developmental regulatory system that provides cells with specific positional identities on the anterior-posterior axis.</text>
</comment>
<comment type="subcellular location">
    <subcellularLocation>
        <location evidence="2">Nucleus</location>
    </subcellularLocation>
</comment>
<comment type="similarity">
    <text evidence="4">Belongs to the Abd-B homeobox family.</text>
</comment>
<evidence type="ECO:0000250" key="1"/>
<evidence type="ECO:0000255" key="2">
    <source>
        <dbReference type="PROSITE-ProRule" id="PRU00108"/>
    </source>
</evidence>
<evidence type="ECO:0000256" key="3">
    <source>
        <dbReference type="SAM" id="MobiDB-lite"/>
    </source>
</evidence>
<evidence type="ECO:0000305" key="4"/>
<proteinExistence type="inferred from homology"/>
<keyword id="KW-0217">Developmental protein</keyword>
<keyword id="KW-0238">DNA-binding</keyword>
<keyword id="KW-0371">Homeobox</keyword>
<keyword id="KW-0539">Nucleus</keyword>
<keyword id="KW-1185">Reference proteome</keyword>
<keyword id="KW-0804">Transcription</keyword>
<keyword id="KW-0805">Transcription regulation</keyword>
<accession>Q1KKV1</accession>
<dbReference type="EMBL" id="DQ481667">
    <property type="protein sequence ID" value="ABF22443.1"/>
    <property type="molecule type" value="Genomic_DNA"/>
</dbReference>
<dbReference type="SMR" id="Q1KKV1"/>
<dbReference type="FunCoup" id="Q1KKV1">
    <property type="interactions" value="4"/>
</dbReference>
<dbReference type="InParanoid" id="Q1KKV1"/>
<dbReference type="Proteomes" id="UP000005226">
    <property type="component" value="Unplaced"/>
</dbReference>
<dbReference type="GO" id="GO:0005634">
    <property type="term" value="C:nucleus"/>
    <property type="evidence" value="ECO:0007669"/>
    <property type="project" value="UniProtKB-SubCell"/>
</dbReference>
<dbReference type="GO" id="GO:0000981">
    <property type="term" value="F:DNA-binding transcription factor activity, RNA polymerase II-specific"/>
    <property type="evidence" value="ECO:0007669"/>
    <property type="project" value="InterPro"/>
</dbReference>
<dbReference type="GO" id="GO:0000978">
    <property type="term" value="F:RNA polymerase II cis-regulatory region sequence-specific DNA binding"/>
    <property type="evidence" value="ECO:0007669"/>
    <property type="project" value="TreeGrafter"/>
</dbReference>
<dbReference type="CDD" id="cd00086">
    <property type="entry name" value="homeodomain"/>
    <property type="match status" value="1"/>
</dbReference>
<dbReference type="Gene3D" id="1.10.10.60">
    <property type="entry name" value="Homeodomain-like"/>
    <property type="match status" value="1"/>
</dbReference>
<dbReference type="InterPro" id="IPR001356">
    <property type="entry name" value="HD"/>
</dbReference>
<dbReference type="InterPro" id="IPR020479">
    <property type="entry name" value="HD_metazoa"/>
</dbReference>
<dbReference type="InterPro" id="IPR017970">
    <property type="entry name" value="Homeobox_CS"/>
</dbReference>
<dbReference type="InterPro" id="IPR009057">
    <property type="entry name" value="Homeodomain-like_sf"/>
</dbReference>
<dbReference type="InterPro" id="IPR046333">
    <property type="entry name" value="HXA10/ABDB-like"/>
</dbReference>
<dbReference type="PANTHER" id="PTHR45874">
    <property type="entry name" value="HOMEOBOX PROTEIN ABDOMINAL-B"/>
    <property type="match status" value="1"/>
</dbReference>
<dbReference type="PANTHER" id="PTHR45874:SF2">
    <property type="entry name" value="HOMEOBOX PROTEIN HOX-C10"/>
    <property type="match status" value="1"/>
</dbReference>
<dbReference type="Pfam" id="PF00046">
    <property type="entry name" value="Homeodomain"/>
    <property type="match status" value="1"/>
</dbReference>
<dbReference type="PRINTS" id="PR00024">
    <property type="entry name" value="HOMEOBOX"/>
</dbReference>
<dbReference type="SMART" id="SM00389">
    <property type="entry name" value="HOX"/>
    <property type="match status" value="1"/>
</dbReference>
<dbReference type="SUPFAM" id="SSF46689">
    <property type="entry name" value="Homeodomain-like"/>
    <property type="match status" value="1"/>
</dbReference>
<dbReference type="PROSITE" id="PS00027">
    <property type="entry name" value="HOMEOBOX_1"/>
    <property type="match status" value="1"/>
</dbReference>
<dbReference type="PROSITE" id="PS50071">
    <property type="entry name" value="HOMEOBOX_2"/>
    <property type="match status" value="1"/>
</dbReference>
<protein>
    <recommendedName>
        <fullName>Homeobox protein Hox-C10a</fullName>
    </recommendedName>
</protein>
<feature type="chain" id="PRO_0000265990" description="Homeobox protein Hox-C10a">
    <location>
        <begin position="1"/>
        <end position="346"/>
    </location>
</feature>
<feature type="DNA-binding region" description="Homeobox" evidence="2">
    <location>
        <begin position="272"/>
        <end position="331"/>
    </location>
</feature>
<feature type="region of interest" description="Disordered" evidence="3">
    <location>
        <begin position="199"/>
        <end position="223"/>
    </location>
</feature>
<feature type="compositionally biased region" description="Basic and acidic residues" evidence="3">
    <location>
        <begin position="199"/>
        <end position="211"/>
    </location>
</feature>